<dbReference type="EC" id="2.7.11.24" evidence="3"/>
<dbReference type="EMBL" id="M64300">
    <property type="protein sequence ID" value="AAA41124.1"/>
    <property type="molecule type" value="mRNA"/>
</dbReference>
<dbReference type="PIR" id="A40033">
    <property type="entry name" value="A40033"/>
</dbReference>
<dbReference type="RefSeq" id="NP_446294.1">
    <property type="nucleotide sequence ID" value="NM_053842.2"/>
</dbReference>
<dbReference type="RefSeq" id="XP_006248720.1">
    <property type="nucleotide sequence ID" value="XM_006248658.5"/>
</dbReference>
<dbReference type="RefSeq" id="XP_006248721.1">
    <property type="nucleotide sequence ID" value="XM_006248659.5"/>
</dbReference>
<dbReference type="RefSeq" id="XP_008767070.1">
    <property type="nucleotide sequence ID" value="XM_008768848.2"/>
</dbReference>
<dbReference type="RefSeq" id="XP_063126312.1">
    <property type="nucleotide sequence ID" value="XM_063270242.1"/>
</dbReference>
<dbReference type="PDB" id="1GOL">
    <property type="method" value="X-ray"/>
    <property type="resolution" value="2.80 A"/>
    <property type="chains" value="A=1-358"/>
</dbReference>
<dbReference type="PDB" id="2ERK">
    <property type="method" value="X-ray"/>
    <property type="resolution" value="2.40 A"/>
    <property type="chains" value="A=1-358"/>
</dbReference>
<dbReference type="PDB" id="2FYS">
    <property type="method" value="X-ray"/>
    <property type="resolution" value="2.50 A"/>
    <property type="chains" value="A/B=2-358"/>
</dbReference>
<dbReference type="PDB" id="2GPH">
    <property type="method" value="X-ray"/>
    <property type="resolution" value="1.90 A"/>
    <property type="chains" value="A=2-358"/>
</dbReference>
<dbReference type="PDB" id="2Z7L">
    <property type="method" value="X-ray"/>
    <property type="resolution" value="2.41 A"/>
    <property type="chains" value="A=1-358"/>
</dbReference>
<dbReference type="PDB" id="3C9W">
    <property type="method" value="X-ray"/>
    <property type="resolution" value="2.50 A"/>
    <property type="chains" value="A/B=2-358"/>
</dbReference>
<dbReference type="PDB" id="3ERK">
    <property type="method" value="X-ray"/>
    <property type="resolution" value="2.10 A"/>
    <property type="chains" value="A=1-358"/>
</dbReference>
<dbReference type="PDB" id="3O71">
    <property type="method" value="X-ray"/>
    <property type="resolution" value="1.95 A"/>
    <property type="chains" value="A=1-358"/>
</dbReference>
<dbReference type="PDB" id="3QYW">
    <property type="method" value="X-ray"/>
    <property type="resolution" value="1.50 A"/>
    <property type="chains" value="A=1-358"/>
</dbReference>
<dbReference type="PDB" id="3QYZ">
    <property type="method" value="X-ray"/>
    <property type="resolution" value="1.46 A"/>
    <property type="chains" value="A=1-358"/>
</dbReference>
<dbReference type="PDB" id="3R63">
    <property type="method" value="X-ray"/>
    <property type="resolution" value="1.70 A"/>
    <property type="chains" value="A=1-358"/>
</dbReference>
<dbReference type="PDB" id="3ZU7">
    <property type="method" value="X-ray"/>
    <property type="resolution" value="1.97 A"/>
    <property type="chains" value="A=3-358"/>
</dbReference>
<dbReference type="PDB" id="3ZUV">
    <property type="method" value="X-ray"/>
    <property type="resolution" value="2.72 A"/>
    <property type="chains" value="A/C=3-358"/>
</dbReference>
<dbReference type="PDB" id="4ERK">
    <property type="method" value="X-ray"/>
    <property type="resolution" value="2.20 A"/>
    <property type="chains" value="A=1-358"/>
</dbReference>
<dbReference type="PDB" id="4GSB">
    <property type="method" value="X-ray"/>
    <property type="resolution" value="1.80 A"/>
    <property type="chains" value="A=1-358"/>
</dbReference>
<dbReference type="PDB" id="4GT3">
    <property type="method" value="X-ray"/>
    <property type="resolution" value="1.68 A"/>
    <property type="chains" value="A=1-358"/>
</dbReference>
<dbReference type="PDB" id="4GVA">
    <property type="method" value="X-ray"/>
    <property type="resolution" value="1.83 A"/>
    <property type="chains" value="A=1-358"/>
</dbReference>
<dbReference type="PDB" id="4I5H">
    <property type="method" value="X-ray"/>
    <property type="resolution" value="1.90 A"/>
    <property type="chains" value="A=2-358"/>
</dbReference>
<dbReference type="PDB" id="4N4S">
    <property type="method" value="X-ray"/>
    <property type="resolution" value="2.20 A"/>
    <property type="chains" value="A/B=2-358"/>
</dbReference>
<dbReference type="PDB" id="4QYY">
    <property type="method" value="X-ray"/>
    <property type="resolution" value="1.65 A"/>
    <property type="chains" value="A=1-358"/>
</dbReference>
<dbReference type="PDB" id="4S2Z">
    <property type="method" value="X-ray"/>
    <property type="resolution" value="1.48 A"/>
    <property type="chains" value="A=1-358"/>
</dbReference>
<dbReference type="PDB" id="4S30">
    <property type="method" value="X-ray"/>
    <property type="resolution" value="2.00 A"/>
    <property type="chains" value="A=1-358"/>
</dbReference>
<dbReference type="PDB" id="4S31">
    <property type="method" value="X-ray"/>
    <property type="resolution" value="1.45 A"/>
    <property type="chains" value="A=1-358"/>
</dbReference>
<dbReference type="PDB" id="4S32">
    <property type="method" value="X-ray"/>
    <property type="resolution" value="1.34 A"/>
    <property type="chains" value="A=1-358"/>
</dbReference>
<dbReference type="PDB" id="4S33">
    <property type="method" value="X-ray"/>
    <property type="resolution" value="1.48 A"/>
    <property type="chains" value="A=1-358"/>
</dbReference>
<dbReference type="PDB" id="4S34">
    <property type="method" value="X-ray"/>
    <property type="resolution" value="2.50 A"/>
    <property type="chains" value="A=1-358"/>
</dbReference>
<dbReference type="PDB" id="4XNE">
    <property type="method" value="X-ray"/>
    <property type="resolution" value="1.80 A"/>
    <property type="chains" value="A=9-354"/>
</dbReference>
<dbReference type="PDB" id="4XOY">
    <property type="method" value="X-ray"/>
    <property type="resolution" value="2.10 A"/>
    <property type="chains" value="A=8-358"/>
</dbReference>
<dbReference type="PDB" id="4XOZ">
    <property type="method" value="X-ray"/>
    <property type="resolution" value="1.95 A"/>
    <property type="chains" value="A=8-358"/>
</dbReference>
<dbReference type="PDB" id="4XP0">
    <property type="method" value="X-ray"/>
    <property type="resolution" value="1.46 A"/>
    <property type="chains" value="A=8-358"/>
</dbReference>
<dbReference type="PDB" id="4XP2">
    <property type="method" value="X-ray"/>
    <property type="resolution" value="1.75 A"/>
    <property type="chains" value="A=8-358"/>
</dbReference>
<dbReference type="PDB" id="4XP3">
    <property type="method" value="X-ray"/>
    <property type="resolution" value="1.78 A"/>
    <property type="chains" value="A=8-358"/>
</dbReference>
<dbReference type="PDB" id="4XRJ">
    <property type="method" value="X-ray"/>
    <property type="resolution" value="1.69 A"/>
    <property type="chains" value="A=9-354"/>
</dbReference>
<dbReference type="PDB" id="4XRL">
    <property type="method" value="X-ray"/>
    <property type="resolution" value="2.55 A"/>
    <property type="chains" value="A=9-353"/>
</dbReference>
<dbReference type="PDB" id="5HD4">
    <property type="method" value="X-ray"/>
    <property type="resolution" value="1.45 A"/>
    <property type="chains" value="A=1-358"/>
</dbReference>
<dbReference type="PDB" id="5HD7">
    <property type="method" value="X-ray"/>
    <property type="resolution" value="1.69 A"/>
    <property type="chains" value="A=1-358"/>
</dbReference>
<dbReference type="PDB" id="5KE0">
    <property type="method" value="X-ray"/>
    <property type="resolution" value="1.68 A"/>
    <property type="chains" value="A=1-358"/>
</dbReference>
<dbReference type="PDB" id="5U6I">
    <property type="method" value="X-ray"/>
    <property type="resolution" value="1.69 A"/>
    <property type="chains" value="A=1-358"/>
</dbReference>
<dbReference type="PDB" id="5UMO">
    <property type="method" value="X-ray"/>
    <property type="resolution" value="2.26 A"/>
    <property type="chains" value="A=4-354"/>
</dbReference>
<dbReference type="PDB" id="6CPW">
    <property type="method" value="X-ray"/>
    <property type="resolution" value="1.85 A"/>
    <property type="chains" value="A=1-358"/>
</dbReference>
<dbReference type="PDB" id="6DCG">
    <property type="method" value="X-ray"/>
    <property type="resolution" value="1.45 A"/>
    <property type="chains" value="A=1-358"/>
</dbReference>
<dbReference type="PDB" id="6FI3">
    <property type="method" value="X-ray"/>
    <property type="resolution" value="1.52 A"/>
    <property type="chains" value="A=1-358"/>
</dbReference>
<dbReference type="PDB" id="6FI6">
    <property type="method" value="X-ray"/>
    <property type="resolution" value="1.65 A"/>
    <property type="chains" value="A=1-358"/>
</dbReference>
<dbReference type="PDB" id="6FJ0">
    <property type="method" value="X-ray"/>
    <property type="resolution" value="1.66 A"/>
    <property type="chains" value="A=1-358"/>
</dbReference>
<dbReference type="PDB" id="6FJB">
    <property type="method" value="X-ray"/>
    <property type="resolution" value="1.85 A"/>
    <property type="chains" value="A=1-358"/>
</dbReference>
<dbReference type="PDB" id="6FJZ">
    <property type="method" value="X-ray"/>
    <property type="resolution" value="1.86 A"/>
    <property type="chains" value="A=1-358"/>
</dbReference>
<dbReference type="PDB" id="6FLE">
    <property type="method" value="X-ray"/>
    <property type="resolution" value="1.48 A"/>
    <property type="chains" value="A=1-358"/>
</dbReference>
<dbReference type="PDB" id="6FLV">
    <property type="method" value="X-ray"/>
    <property type="resolution" value="1.91 A"/>
    <property type="chains" value="A=1-358"/>
</dbReference>
<dbReference type="PDB" id="6FMA">
    <property type="method" value="X-ray"/>
    <property type="resolution" value="1.67 A"/>
    <property type="chains" value="A=1-358"/>
</dbReference>
<dbReference type="PDB" id="6FN5">
    <property type="method" value="X-ray"/>
    <property type="resolution" value="1.93 A"/>
    <property type="chains" value="A=1-358"/>
</dbReference>
<dbReference type="PDB" id="6FQ7">
    <property type="method" value="X-ray"/>
    <property type="resolution" value="1.60 A"/>
    <property type="chains" value="A=1-358"/>
</dbReference>
<dbReference type="PDB" id="6FR1">
    <property type="method" value="X-ray"/>
    <property type="resolution" value="1.56 A"/>
    <property type="chains" value="A=1-358"/>
</dbReference>
<dbReference type="PDB" id="6FRP">
    <property type="method" value="X-ray"/>
    <property type="resolution" value="1.53 A"/>
    <property type="chains" value="A=1-358"/>
</dbReference>
<dbReference type="PDB" id="6FXV">
    <property type="method" value="X-ray"/>
    <property type="resolution" value="1.53 A"/>
    <property type="chains" value="A=1-358"/>
</dbReference>
<dbReference type="PDB" id="6OPK">
    <property type="method" value="X-ray"/>
    <property type="resolution" value="2.54 A"/>
    <property type="chains" value="A=7-358"/>
</dbReference>
<dbReference type="PDB" id="6OT6">
    <property type="method" value="X-ray"/>
    <property type="resolution" value="1.65 A"/>
    <property type="chains" value="A=1-358"/>
</dbReference>
<dbReference type="PDB" id="6OTS">
    <property type="method" value="X-ray"/>
    <property type="resolution" value="2.10 A"/>
    <property type="chains" value="A=1-358"/>
</dbReference>
<dbReference type="PDB" id="6RFO">
    <property type="method" value="X-ray"/>
    <property type="resolution" value="1.70 A"/>
    <property type="chains" value="A=1-163, A=200-358"/>
</dbReference>
<dbReference type="PDB" id="6RFP">
    <property type="method" value="X-ray"/>
    <property type="resolution" value="1.74 A"/>
    <property type="chains" value="A=1-358"/>
</dbReference>
<dbReference type="PDB" id="7UGB">
    <property type="method" value="X-ray"/>
    <property type="resolution" value="1.90 A"/>
    <property type="chains" value="A=3-358"/>
</dbReference>
<dbReference type="PDB" id="8RLX">
    <property type="method" value="X-ray"/>
    <property type="resolution" value="1.60 A"/>
    <property type="chains" value="A=1-358"/>
</dbReference>
<dbReference type="PDB" id="8RM2">
    <property type="method" value="X-ray"/>
    <property type="resolution" value="1.55 A"/>
    <property type="chains" value="A=1-358"/>
</dbReference>
<dbReference type="PDB" id="8RMB">
    <property type="method" value="X-ray"/>
    <property type="resolution" value="1.55 A"/>
    <property type="chains" value="A=1-358"/>
</dbReference>
<dbReference type="PDB" id="8RQV">
    <property type="method" value="X-ray"/>
    <property type="resolution" value="2.19 A"/>
    <property type="chains" value="A=1-358"/>
</dbReference>
<dbReference type="PDB" id="8RQW">
    <property type="method" value="X-ray"/>
    <property type="resolution" value="1.80 A"/>
    <property type="chains" value="A=1-358"/>
</dbReference>
<dbReference type="PDB" id="8RQX">
    <property type="method" value="X-ray"/>
    <property type="resolution" value="1.70 A"/>
    <property type="chains" value="A=1-358"/>
</dbReference>
<dbReference type="PDBsum" id="1GOL"/>
<dbReference type="PDBsum" id="2ERK"/>
<dbReference type="PDBsum" id="2FYS"/>
<dbReference type="PDBsum" id="2GPH"/>
<dbReference type="PDBsum" id="2Z7L"/>
<dbReference type="PDBsum" id="3C9W"/>
<dbReference type="PDBsum" id="3ERK"/>
<dbReference type="PDBsum" id="3O71"/>
<dbReference type="PDBsum" id="3QYW"/>
<dbReference type="PDBsum" id="3QYZ"/>
<dbReference type="PDBsum" id="3R63"/>
<dbReference type="PDBsum" id="3ZU7"/>
<dbReference type="PDBsum" id="3ZUV"/>
<dbReference type="PDBsum" id="4ERK"/>
<dbReference type="PDBsum" id="4GSB"/>
<dbReference type="PDBsum" id="4GT3"/>
<dbReference type="PDBsum" id="4GVA"/>
<dbReference type="PDBsum" id="4I5H"/>
<dbReference type="PDBsum" id="4N4S"/>
<dbReference type="PDBsum" id="4QYY"/>
<dbReference type="PDBsum" id="4S2Z"/>
<dbReference type="PDBsum" id="4S30"/>
<dbReference type="PDBsum" id="4S31"/>
<dbReference type="PDBsum" id="4S32"/>
<dbReference type="PDBsum" id="4S33"/>
<dbReference type="PDBsum" id="4S34"/>
<dbReference type="PDBsum" id="4XNE"/>
<dbReference type="PDBsum" id="4XOY"/>
<dbReference type="PDBsum" id="4XOZ"/>
<dbReference type="PDBsum" id="4XP0"/>
<dbReference type="PDBsum" id="4XP2"/>
<dbReference type="PDBsum" id="4XP3"/>
<dbReference type="PDBsum" id="4XRJ"/>
<dbReference type="PDBsum" id="4XRL"/>
<dbReference type="PDBsum" id="5HD4"/>
<dbReference type="PDBsum" id="5HD7"/>
<dbReference type="PDBsum" id="5KE0"/>
<dbReference type="PDBsum" id="5U6I"/>
<dbReference type="PDBsum" id="5UMO"/>
<dbReference type="PDBsum" id="6CPW"/>
<dbReference type="PDBsum" id="6DCG"/>
<dbReference type="PDBsum" id="6FI3"/>
<dbReference type="PDBsum" id="6FI6"/>
<dbReference type="PDBsum" id="6FJ0"/>
<dbReference type="PDBsum" id="6FJB"/>
<dbReference type="PDBsum" id="6FJZ"/>
<dbReference type="PDBsum" id="6FLE"/>
<dbReference type="PDBsum" id="6FLV"/>
<dbReference type="PDBsum" id="6FMA"/>
<dbReference type="PDBsum" id="6FN5"/>
<dbReference type="PDBsum" id="6FQ7"/>
<dbReference type="PDBsum" id="6FR1"/>
<dbReference type="PDBsum" id="6FRP"/>
<dbReference type="PDBsum" id="6FXV"/>
<dbReference type="PDBsum" id="6OPK"/>
<dbReference type="PDBsum" id="6OT6"/>
<dbReference type="PDBsum" id="6OTS"/>
<dbReference type="PDBsum" id="6RFO"/>
<dbReference type="PDBsum" id="6RFP"/>
<dbReference type="PDBsum" id="7UGB"/>
<dbReference type="PDBsum" id="8RLX"/>
<dbReference type="PDBsum" id="8RM2"/>
<dbReference type="PDBsum" id="8RMB"/>
<dbReference type="PDBsum" id="8RQV"/>
<dbReference type="PDBsum" id="8RQW"/>
<dbReference type="PDBsum" id="8RQX"/>
<dbReference type="BMRB" id="P63086"/>
<dbReference type="SMR" id="P63086"/>
<dbReference type="BioGRID" id="250505">
    <property type="interactions" value="176"/>
</dbReference>
<dbReference type="DIP" id="DIP-29117N"/>
<dbReference type="ELM" id="P63086"/>
<dbReference type="FunCoup" id="P63086">
    <property type="interactions" value="4610"/>
</dbReference>
<dbReference type="IntAct" id="P63086">
    <property type="interactions" value="15"/>
</dbReference>
<dbReference type="MINT" id="P63086"/>
<dbReference type="STRING" id="10116.ENSRNOP00000002533"/>
<dbReference type="BindingDB" id="P63086"/>
<dbReference type="ChEMBL" id="CHEMBL5233"/>
<dbReference type="CarbonylDB" id="P63086"/>
<dbReference type="GlyGen" id="P63086">
    <property type="glycosylation" value="1 site, 1 O-linked glycan (1 site)"/>
</dbReference>
<dbReference type="iPTMnet" id="P63086"/>
<dbReference type="PhosphoSitePlus" id="P63086"/>
<dbReference type="jPOST" id="P63086"/>
<dbReference type="PaxDb" id="10116-ENSRNOP00000002533"/>
<dbReference type="Ensembl" id="ENSRNOT00000002533.8">
    <property type="protein sequence ID" value="ENSRNOP00000002533.6"/>
    <property type="gene ID" value="ENSRNOG00000001849.8"/>
</dbReference>
<dbReference type="GeneID" id="116590"/>
<dbReference type="KEGG" id="rno:116590"/>
<dbReference type="AGR" id="RGD:70500"/>
<dbReference type="CTD" id="5594"/>
<dbReference type="RGD" id="70500">
    <property type="gene designation" value="Mapk1"/>
</dbReference>
<dbReference type="eggNOG" id="KOG0660">
    <property type="taxonomic scope" value="Eukaryota"/>
</dbReference>
<dbReference type="GeneTree" id="ENSGT00940000156771"/>
<dbReference type="HOGENOM" id="CLU_000288_181_1_1"/>
<dbReference type="InParanoid" id="P63086"/>
<dbReference type="OrthoDB" id="12864at9989"/>
<dbReference type="PhylomeDB" id="P63086"/>
<dbReference type="BRENDA" id="2.7.11.24">
    <property type="organism ID" value="5301"/>
</dbReference>
<dbReference type="Reactome" id="R-RNO-111995">
    <property type="pathway name" value="phospho-PLA2 pathway"/>
</dbReference>
<dbReference type="Reactome" id="R-RNO-112409">
    <property type="pathway name" value="RAF-independent MAPK1/3 activation"/>
</dbReference>
<dbReference type="Reactome" id="R-RNO-112411">
    <property type="pathway name" value="MAPK1 (ERK2) activation"/>
</dbReference>
<dbReference type="Reactome" id="R-RNO-1181150">
    <property type="pathway name" value="Signaling by NODAL"/>
</dbReference>
<dbReference type="Reactome" id="R-RNO-1295596">
    <property type="pathway name" value="Spry regulation of FGF signaling"/>
</dbReference>
<dbReference type="Reactome" id="R-RNO-1502540">
    <property type="pathway name" value="Signaling by Activin"/>
</dbReference>
<dbReference type="Reactome" id="R-RNO-162658">
    <property type="pathway name" value="Golgi Cisternae Pericentriolar Stack Reorganization"/>
</dbReference>
<dbReference type="Reactome" id="R-RNO-170968">
    <property type="pathway name" value="Frs2-mediated activation"/>
</dbReference>
<dbReference type="Reactome" id="R-RNO-198753">
    <property type="pathway name" value="ERK/MAPK targets"/>
</dbReference>
<dbReference type="Reactome" id="R-RNO-202670">
    <property type="pathway name" value="ERKs are inactivated"/>
</dbReference>
<dbReference type="Reactome" id="R-RNO-2029482">
    <property type="pathway name" value="Regulation of actin dynamics for phagocytic cup formation"/>
</dbReference>
<dbReference type="Reactome" id="R-RNO-2173795">
    <property type="pathway name" value="Downregulation of SMAD2/3:SMAD4 transcriptional activity"/>
</dbReference>
<dbReference type="Reactome" id="R-RNO-2173796">
    <property type="pathway name" value="SMAD2/SMAD3:SMAD4 heterotrimer regulates transcription"/>
</dbReference>
<dbReference type="Reactome" id="R-RNO-2559580">
    <property type="pathway name" value="Oxidative Stress Induced Senescence"/>
</dbReference>
<dbReference type="Reactome" id="R-RNO-2559582">
    <property type="pathway name" value="Senescence-Associated Secretory Phenotype (SASP)"/>
</dbReference>
<dbReference type="Reactome" id="R-RNO-2559585">
    <property type="pathway name" value="Oncogene Induced Senescence"/>
</dbReference>
<dbReference type="Reactome" id="R-RNO-2871796">
    <property type="pathway name" value="FCERI mediated MAPK activation"/>
</dbReference>
<dbReference type="Reactome" id="R-RNO-3371453">
    <property type="pathway name" value="Regulation of HSF1-mediated heat shock response"/>
</dbReference>
<dbReference type="Reactome" id="R-RNO-375165">
    <property type="pathway name" value="NCAM signaling for neurite out-growth"/>
</dbReference>
<dbReference type="Reactome" id="R-RNO-437239">
    <property type="pathway name" value="Recycling pathway of L1"/>
</dbReference>
<dbReference type="Reactome" id="R-RNO-445144">
    <property type="pathway name" value="Signal transduction by L1"/>
</dbReference>
<dbReference type="Reactome" id="R-RNO-450341">
    <property type="pathway name" value="Activation of the AP-1 family of transcription factors"/>
</dbReference>
<dbReference type="Reactome" id="R-RNO-456926">
    <property type="pathway name" value="Thrombin signalling through proteinase activated receptors (PARs)"/>
</dbReference>
<dbReference type="Reactome" id="R-RNO-5654726">
    <property type="pathway name" value="Negative regulation of FGFR1 signaling"/>
</dbReference>
<dbReference type="Reactome" id="R-RNO-5654727">
    <property type="pathway name" value="Negative regulation of FGFR2 signaling"/>
</dbReference>
<dbReference type="Reactome" id="R-RNO-5654732">
    <property type="pathway name" value="Negative regulation of FGFR3 signaling"/>
</dbReference>
<dbReference type="Reactome" id="R-RNO-5654733">
    <property type="pathway name" value="Negative regulation of FGFR4 signaling"/>
</dbReference>
<dbReference type="Reactome" id="R-RNO-5663213">
    <property type="pathway name" value="RHO GTPases Activate WASPs and WAVEs"/>
</dbReference>
<dbReference type="Reactome" id="R-RNO-5668599">
    <property type="pathway name" value="RHO GTPases Activate NADPH Oxidases"/>
</dbReference>
<dbReference type="Reactome" id="R-RNO-5673001">
    <property type="pathway name" value="RAF/MAP kinase cascade"/>
</dbReference>
<dbReference type="Reactome" id="R-RNO-5674135">
    <property type="pathway name" value="MAP2K and MAPK activation"/>
</dbReference>
<dbReference type="Reactome" id="R-RNO-5674499">
    <property type="pathway name" value="Negative feedback regulation of MAPK pathway"/>
</dbReference>
<dbReference type="Reactome" id="R-RNO-5675221">
    <property type="pathway name" value="Negative regulation of MAPK pathway"/>
</dbReference>
<dbReference type="Reactome" id="R-RNO-6798695">
    <property type="pathway name" value="Neutrophil degranulation"/>
</dbReference>
<dbReference type="Reactome" id="R-RNO-6811558">
    <property type="pathway name" value="PI5P, PP2A and IER3 Regulate PI3K/AKT Signaling"/>
</dbReference>
<dbReference type="Reactome" id="R-RNO-74749">
    <property type="pathway name" value="Signal attenuation"/>
</dbReference>
<dbReference type="Reactome" id="R-RNO-877300">
    <property type="pathway name" value="Interferon gamma signaling"/>
</dbReference>
<dbReference type="Reactome" id="R-RNO-881907">
    <property type="pathway name" value="Gastrin-CREB signalling pathway via PKC and MAPK"/>
</dbReference>
<dbReference type="Reactome" id="R-RNO-9627069">
    <property type="pathway name" value="Regulation of the apoptosome activity"/>
</dbReference>
<dbReference type="Reactome" id="R-RNO-9634635">
    <property type="pathway name" value="Estrogen-stimulated signaling through PRKCZ"/>
</dbReference>
<dbReference type="Reactome" id="R-RNO-9634638">
    <property type="pathway name" value="Estrogen-dependent nuclear events downstream of ESR-membrane signaling"/>
</dbReference>
<dbReference type="Reactome" id="R-RNO-9732724">
    <property type="pathway name" value="IFNG signaling activates MAPKs"/>
</dbReference>
<dbReference type="Reactome" id="R-RNO-982772">
    <property type="pathway name" value="Growth hormone receptor signaling"/>
</dbReference>
<dbReference type="Reactome" id="R-RNO-9856649">
    <property type="pathway name" value="Transcriptional and post-translational regulation of MITF-M expression and activity"/>
</dbReference>
<dbReference type="EvolutionaryTrace" id="P63086"/>
<dbReference type="PRO" id="PR:P63086"/>
<dbReference type="Proteomes" id="UP000002494">
    <property type="component" value="Chromosome 11"/>
</dbReference>
<dbReference type="Bgee" id="ENSRNOG00000001849">
    <property type="expression patterns" value="Expressed in frontal cortex and 19 other cell types or tissues"/>
</dbReference>
<dbReference type="GO" id="GO:0030424">
    <property type="term" value="C:axon"/>
    <property type="evidence" value="ECO:0000314"/>
    <property type="project" value="RGD"/>
</dbReference>
<dbReference type="GO" id="GO:0005901">
    <property type="term" value="C:caveola"/>
    <property type="evidence" value="ECO:0000314"/>
    <property type="project" value="UniProtKB"/>
</dbReference>
<dbReference type="GO" id="GO:0005813">
    <property type="term" value="C:centrosome"/>
    <property type="evidence" value="ECO:0007669"/>
    <property type="project" value="UniProtKB-SubCell"/>
</dbReference>
<dbReference type="GO" id="GO:0005737">
    <property type="term" value="C:cytoplasm"/>
    <property type="evidence" value="ECO:0000314"/>
    <property type="project" value="UniProtKB"/>
</dbReference>
<dbReference type="GO" id="GO:0005856">
    <property type="term" value="C:cytoskeleton"/>
    <property type="evidence" value="ECO:0000304"/>
    <property type="project" value="UniProtKB"/>
</dbReference>
<dbReference type="GO" id="GO:0005829">
    <property type="term" value="C:cytosol"/>
    <property type="evidence" value="ECO:0000266"/>
    <property type="project" value="RGD"/>
</dbReference>
<dbReference type="GO" id="GO:0032839">
    <property type="term" value="C:dendrite cytoplasm"/>
    <property type="evidence" value="ECO:0000314"/>
    <property type="project" value="RGD"/>
</dbReference>
<dbReference type="GO" id="GO:0005769">
    <property type="term" value="C:early endosome"/>
    <property type="evidence" value="ECO:0000304"/>
    <property type="project" value="UniProtKB"/>
</dbReference>
<dbReference type="GO" id="GO:0005925">
    <property type="term" value="C:focal adhesion"/>
    <property type="evidence" value="ECO:0000304"/>
    <property type="project" value="UniProtKB"/>
</dbReference>
<dbReference type="GO" id="GO:0005794">
    <property type="term" value="C:Golgi apparatus"/>
    <property type="evidence" value="ECO:0000304"/>
    <property type="project" value="UniProtKB"/>
</dbReference>
<dbReference type="GO" id="GO:0005770">
    <property type="term" value="C:late endosome"/>
    <property type="evidence" value="ECO:0000304"/>
    <property type="project" value="UniProtKB"/>
</dbReference>
<dbReference type="GO" id="GO:0005739">
    <property type="term" value="C:mitochondrion"/>
    <property type="evidence" value="ECO:0000266"/>
    <property type="project" value="RGD"/>
</dbReference>
<dbReference type="GO" id="GO:0072686">
    <property type="term" value="C:mitotic spindle"/>
    <property type="evidence" value="ECO:0000250"/>
    <property type="project" value="UniProtKB"/>
</dbReference>
<dbReference type="GO" id="GO:0005654">
    <property type="term" value="C:nucleoplasm"/>
    <property type="evidence" value="ECO:0000314"/>
    <property type="project" value="UniProtKB"/>
</dbReference>
<dbReference type="GO" id="GO:0005634">
    <property type="term" value="C:nucleus"/>
    <property type="evidence" value="ECO:0000266"/>
    <property type="project" value="RGD"/>
</dbReference>
<dbReference type="GO" id="GO:0043204">
    <property type="term" value="C:perikaryon"/>
    <property type="evidence" value="ECO:0000314"/>
    <property type="project" value="RGD"/>
</dbReference>
<dbReference type="GO" id="GO:0005886">
    <property type="term" value="C:plasma membrane"/>
    <property type="evidence" value="ECO:0000314"/>
    <property type="project" value="UniProtKB"/>
</dbReference>
<dbReference type="GO" id="GO:0014069">
    <property type="term" value="C:postsynaptic density"/>
    <property type="evidence" value="ECO:0000314"/>
    <property type="project" value="SynGO"/>
</dbReference>
<dbReference type="GO" id="GO:0032991">
    <property type="term" value="C:protein-containing complex"/>
    <property type="evidence" value="ECO:0000314"/>
    <property type="project" value="RGD"/>
</dbReference>
<dbReference type="GO" id="GO:0031143">
    <property type="term" value="C:pseudopodium"/>
    <property type="evidence" value="ECO:0000266"/>
    <property type="project" value="RGD"/>
</dbReference>
<dbReference type="GO" id="GO:0005524">
    <property type="term" value="F:ATP binding"/>
    <property type="evidence" value="ECO:0000314"/>
    <property type="project" value="RGD"/>
</dbReference>
<dbReference type="GO" id="GO:0003690">
    <property type="term" value="F:double-stranded DNA binding"/>
    <property type="evidence" value="ECO:0000314"/>
    <property type="project" value="RGD"/>
</dbReference>
<dbReference type="GO" id="GO:0042802">
    <property type="term" value="F:identical protein binding"/>
    <property type="evidence" value="ECO:0000266"/>
    <property type="project" value="RGD"/>
</dbReference>
<dbReference type="GO" id="GO:0016301">
    <property type="term" value="F:kinase activity"/>
    <property type="evidence" value="ECO:0000266"/>
    <property type="project" value="RGD"/>
</dbReference>
<dbReference type="GO" id="GO:0004707">
    <property type="term" value="F:MAP kinase activity"/>
    <property type="evidence" value="ECO:0000314"/>
    <property type="project" value="UniProtKB"/>
</dbReference>
<dbReference type="GO" id="GO:0031435">
    <property type="term" value="F:mitogen-activated protein kinase kinase kinase binding"/>
    <property type="evidence" value="ECO:0000353"/>
    <property type="project" value="RGD"/>
</dbReference>
<dbReference type="GO" id="GO:0019902">
    <property type="term" value="F:phosphatase binding"/>
    <property type="evidence" value="ECO:0000266"/>
    <property type="project" value="RGD"/>
</dbReference>
<dbReference type="GO" id="GO:0001784">
    <property type="term" value="F:phosphotyrosine residue binding"/>
    <property type="evidence" value="ECO:0000266"/>
    <property type="project" value="RGD"/>
</dbReference>
<dbReference type="GO" id="GO:0004672">
    <property type="term" value="F:protein kinase activity"/>
    <property type="evidence" value="ECO:0000266"/>
    <property type="project" value="RGD"/>
</dbReference>
<dbReference type="GO" id="GO:0019901">
    <property type="term" value="F:protein kinase binding"/>
    <property type="evidence" value="ECO:0000353"/>
    <property type="project" value="RGD"/>
</dbReference>
<dbReference type="GO" id="GO:0106310">
    <property type="term" value="F:protein serine kinase activity"/>
    <property type="evidence" value="ECO:0007669"/>
    <property type="project" value="RHEA"/>
</dbReference>
<dbReference type="GO" id="GO:0004674">
    <property type="term" value="F:protein serine/threonine kinase activity"/>
    <property type="evidence" value="ECO:0000314"/>
    <property type="project" value="MGI"/>
</dbReference>
<dbReference type="GO" id="GO:0008353">
    <property type="term" value="F:RNA polymerase II CTD heptapeptide repeat kinase activity"/>
    <property type="evidence" value="ECO:0000266"/>
    <property type="project" value="RGD"/>
</dbReference>
<dbReference type="GO" id="GO:0030521">
    <property type="term" value="P:androgen receptor signaling pathway"/>
    <property type="evidence" value="ECO:0000266"/>
    <property type="project" value="RGD"/>
</dbReference>
<dbReference type="GO" id="GO:0009887">
    <property type="term" value="P:animal organ morphogenesis"/>
    <property type="evidence" value="ECO:0000266"/>
    <property type="project" value="RGD"/>
</dbReference>
<dbReference type="GO" id="GO:0006915">
    <property type="term" value="P:apoptotic process"/>
    <property type="evidence" value="ECO:0007669"/>
    <property type="project" value="UniProtKB-KW"/>
</dbReference>
<dbReference type="GO" id="GO:0050853">
    <property type="term" value="P:B cell receptor signaling pathway"/>
    <property type="evidence" value="ECO:0000266"/>
    <property type="project" value="RGD"/>
</dbReference>
<dbReference type="GO" id="GO:0060020">
    <property type="term" value="P:Bergmann glial cell differentiation"/>
    <property type="evidence" value="ECO:0000266"/>
    <property type="project" value="RGD"/>
</dbReference>
<dbReference type="GO" id="GO:0061308">
    <property type="term" value="P:cardiac neural crest cell development involved in heart development"/>
    <property type="evidence" value="ECO:0000266"/>
    <property type="project" value="RGD"/>
</dbReference>
<dbReference type="GO" id="GO:0072584">
    <property type="term" value="P:caveolin-mediated endocytosis"/>
    <property type="evidence" value="ECO:0000304"/>
    <property type="project" value="UniProtKB"/>
</dbReference>
<dbReference type="GO" id="GO:0007166">
    <property type="term" value="P:cell surface receptor signaling pathway"/>
    <property type="evidence" value="ECO:0000318"/>
    <property type="project" value="GO_Central"/>
</dbReference>
<dbReference type="GO" id="GO:0034198">
    <property type="term" value="P:cellular response to amino acid starvation"/>
    <property type="evidence" value="ECO:0000266"/>
    <property type="project" value="RGD"/>
</dbReference>
<dbReference type="GO" id="GO:0071320">
    <property type="term" value="P:cellular response to cAMP"/>
    <property type="evidence" value="ECO:0000270"/>
    <property type="project" value="RGD"/>
</dbReference>
<dbReference type="GO" id="GO:0071364">
    <property type="term" value="P:cellular response to epidermal growth factor stimulus"/>
    <property type="evidence" value="ECO:0000270"/>
    <property type="project" value="RGD"/>
</dbReference>
<dbReference type="GO" id="GO:1990314">
    <property type="term" value="P:cellular response to insulin-like growth factor stimulus"/>
    <property type="evidence" value="ECO:0000270"/>
    <property type="project" value="RGD"/>
</dbReference>
<dbReference type="GO" id="GO:0061431">
    <property type="term" value="P:cellular response to methionine"/>
    <property type="evidence" value="ECO:0000270"/>
    <property type="project" value="RGD"/>
</dbReference>
<dbReference type="GO" id="GO:0036120">
    <property type="term" value="P:cellular response to platelet-derived growth factor stimulus"/>
    <property type="evidence" value="ECO:0000270"/>
    <property type="project" value="RGD"/>
</dbReference>
<dbReference type="GO" id="GO:0071380">
    <property type="term" value="P:cellular response to prostaglandin E stimulus"/>
    <property type="evidence" value="ECO:0000270"/>
    <property type="project" value="RGD"/>
</dbReference>
<dbReference type="GO" id="GO:0097237">
    <property type="term" value="P:cellular response to toxic substance"/>
    <property type="evidence" value="ECO:0000314"/>
    <property type="project" value="RGD"/>
</dbReference>
<dbReference type="GO" id="GO:0071356">
    <property type="term" value="P:cellular response to tumor necrosis factor"/>
    <property type="evidence" value="ECO:0000266"/>
    <property type="project" value="RGD"/>
</dbReference>
<dbReference type="GO" id="GO:0019858">
    <property type="term" value="P:cytosine metabolic process"/>
    <property type="evidence" value="ECO:0000266"/>
    <property type="project" value="RGD"/>
</dbReference>
<dbReference type="GO" id="GO:0046697">
    <property type="term" value="P:decidualization"/>
    <property type="evidence" value="ECO:0000314"/>
    <property type="project" value="RGD"/>
</dbReference>
<dbReference type="GO" id="GO:0015966">
    <property type="term" value="P:diadenosine tetraphosphate biosynthetic process"/>
    <property type="evidence" value="ECO:0000315"/>
    <property type="project" value="CAFA"/>
</dbReference>
<dbReference type="GO" id="GO:0006974">
    <property type="term" value="P:DNA damage response"/>
    <property type="evidence" value="ECO:0000266"/>
    <property type="project" value="RGD"/>
</dbReference>
<dbReference type="GO" id="GO:0007173">
    <property type="term" value="P:epidermal growth factor receptor signaling pathway"/>
    <property type="evidence" value="ECO:0000266"/>
    <property type="project" value="RGD"/>
</dbReference>
<dbReference type="GO" id="GO:0038127">
    <property type="term" value="P:ERBB signaling pathway"/>
    <property type="evidence" value="ECO:0000266"/>
    <property type="project" value="RGD"/>
</dbReference>
<dbReference type="GO" id="GO:0038133">
    <property type="term" value="P:ERBB2-ERBB3 signaling pathway"/>
    <property type="evidence" value="ECO:0000266"/>
    <property type="project" value="RGD"/>
</dbReference>
<dbReference type="GO" id="GO:0070371">
    <property type="term" value="P:ERK1 and ERK2 cascade"/>
    <property type="evidence" value="ECO:0000315"/>
    <property type="project" value="CAFA"/>
</dbReference>
<dbReference type="GO" id="GO:0044849">
    <property type="term" value="P:estrous cycle"/>
    <property type="evidence" value="ECO:0000270"/>
    <property type="project" value="RGD"/>
</dbReference>
<dbReference type="GO" id="GO:0060324">
    <property type="term" value="P:face development"/>
    <property type="evidence" value="ECO:0000266"/>
    <property type="project" value="RGD"/>
</dbReference>
<dbReference type="GO" id="GO:0007507">
    <property type="term" value="P:heart development"/>
    <property type="evidence" value="ECO:0000266"/>
    <property type="project" value="RGD"/>
</dbReference>
<dbReference type="GO" id="GO:0008286">
    <property type="term" value="P:insulin receptor signaling pathway"/>
    <property type="evidence" value="ECO:0000266"/>
    <property type="project" value="RGD"/>
</dbReference>
<dbReference type="GO" id="GO:0048009">
    <property type="term" value="P:insulin-like growth factor receptor signaling pathway"/>
    <property type="evidence" value="ECO:0000266"/>
    <property type="project" value="RGD"/>
</dbReference>
<dbReference type="GO" id="GO:0035556">
    <property type="term" value="P:intracellular signal transduction"/>
    <property type="evidence" value="ECO:0000314"/>
    <property type="project" value="RGD"/>
</dbReference>
<dbReference type="GO" id="GO:0060716">
    <property type="term" value="P:labyrinthine layer blood vessel development"/>
    <property type="evidence" value="ECO:0000266"/>
    <property type="project" value="RGD"/>
</dbReference>
<dbReference type="GO" id="GO:0031663">
    <property type="term" value="P:lipopolysaccharide-mediated signaling pathway"/>
    <property type="evidence" value="ECO:0000266"/>
    <property type="project" value="RGD"/>
</dbReference>
<dbReference type="GO" id="GO:0060291">
    <property type="term" value="P:long-term synaptic potentiation"/>
    <property type="evidence" value="ECO:0000266"/>
    <property type="project" value="RGD"/>
</dbReference>
<dbReference type="GO" id="GO:0060425">
    <property type="term" value="P:lung morphogenesis"/>
    <property type="evidence" value="ECO:0000266"/>
    <property type="project" value="RGD"/>
</dbReference>
<dbReference type="GO" id="GO:0033598">
    <property type="term" value="P:mammary gland epithelial cell proliferation"/>
    <property type="evidence" value="ECO:0000266"/>
    <property type="project" value="RGD"/>
</dbReference>
<dbReference type="GO" id="GO:0000165">
    <property type="term" value="P:MAPK cascade"/>
    <property type="evidence" value="ECO:0000315"/>
    <property type="project" value="RGD"/>
</dbReference>
<dbReference type="GO" id="GO:0042552">
    <property type="term" value="P:myelination"/>
    <property type="evidence" value="ECO:0000266"/>
    <property type="project" value="RGD"/>
</dbReference>
<dbReference type="GO" id="GO:0045596">
    <property type="term" value="P:negative regulation of cell differentiation"/>
    <property type="evidence" value="ECO:0000266"/>
    <property type="project" value="RGD"/>
</dbReference>
<dbReference type="GO" id="GO:0014032">
    <property type="term" value="P:neural crest cell development"/>
    <property type="evidence" value="ECO:0000266"/>
    <property type="project" value="RGD"/>
</dbReference>
<dbReference type="GO" id="GO:0042473">
    <property type="term" value="P:outer ear morphogenesis"/>
    <property type="evidence" value="ECO:0000266"/>
    <property type="project" value="RGD"/>
</dbReference>
<dbReference type="GO" id="GO:0018105">
    <property type="term" value="P:peptidyl-serine phosphorylation"/>
    <property type="evidence" value="ECO:0000314"/>
    <property type="project" value="MGI"/>
</dbReference>
<dbReference type="GO" id="GO:0018107">
    <property type="term" value="P:peptidyl-threonine phosphorylation"/>
    <property type="evidence" value="ECO:0000250"/>
    <property type="project" value="UniProtKB"/>
</dbReference>
<dbReference type="GO" id="GO:0060045">
    <property type="term" value="P:positive regulation of cardiac muscle cell proliferation"/>
    <property type="evidence" value="ECO:0000315"/>
    <property type="project" value="RGD"/>
</dbReference>
<dbReference type="GO" id="GO:0030335">
    <property type="term" value="P:positive regulation of cell migration"/>
    <property type="evidence" value="ECO:0000270"/>
    <property type="project" value="RGD"/>
</dbReference>
<dbReference type="GO" id="GO:0008284">
    <property type="term" value="P:positive regulation of cell population proliferation"/>
    <property type="evidence" value="ECO:0000270"/>
    <property type="project" value="RGD"/>
</dbReference>
<dbReference type="GO" id="GO:0045542">
    <property type="term" value="P:positive regulation of cholesterol biosynthetic process"/>
    <property type="evidence" value="ECO:0000266"/>
    <property type="project" value="RGD"/>
</dbReference>
<dbReference type="GO" id="GO:0045893">
    <property type="term" value="P:positive regulation of DNA-templated transcription"/>
    <property type="evidence" value="ECO:0000315"/>
    <property type="project" value="CAFA"/>
</dbReference>
<dbReference type="GO" id="GO:0010759">
    <property type="term" value="P:positive regulation of macrophage chemotaxis"/>
    <property type="evidence" value="ECO:0000266"/>
    <property type="project" value="RGD"/>
</dbReference>
<dbReference type="GO" id="GO:0120041">
    <property type="term" value="P:positive regulation of macrophage proliferation"/>
    <property type="evidence" value="ECO:0000266"/>
    <property type="project" value="RGD"/>
</dbReference>
<dbReference type="GO" id="GO:0042307">
    <property type="term" value="P:positive regulation of protein import into nucleus"/>
    <property type="evidence" value="ECO:0000315"/>
    <property type="project" value="UniProtKB"/>
</dbReference>
<dbReference type="GO" id="GO:0032206">
    <property type="term" value="P:positive regulation of telomere maintenance"/>
    <property type="evidence" value="ECO:0000266"/>
    <property type="project" value="RGD"/>
</dbReference>
<dbReference type="GO" id="GO:0045727">
    <property type="term" value="P:positive regulation of translation"/>
    <property type="evidence" value="ECO:0000315"/>
    <property type="project" value="RGD"/>
</dbReference>
<dbReference type="GO" id="GO:0050847">
    <property type="term" value="P:progesterone receptor signaling pathway"/>
    <property type="evidence" value="ECO:0000266"/>
    <property type="project" value="RGD"/>
</dbReference>
<dbReference type="GO" id="GO:0006468">
    <property type="term" value="P:protein phosphorylation"/>
    <property type="evidence" value="ECO:0000314"/>
    <property type="project" value="UniProtKB"/>
</dbReference>
<dbReference type="GO" id="GO:0030641">
    <property type="term" value="P:regulation of cellular pH"/>
    <property type="evidence" value="ECO:0000266"/>
    <property type="project" value="RGD"/>
</dbReference>
<dbReference type="GO" id="GO:0051493">
    <property type="term" value="P:regulation of cytoskeleton organization"/>
    <property type="evidence" value="ECO:0000304"/>
    <property type="project" value="UniProtKB"/>
</dbReference>
<dbReference type="GO" id="GO:2000641">
    <property type="term" value="P:regulation of early endosome to late endosome transport"/>
    <property type="evidence" value="ECO:0000304"/>
    <property type="project" value="UniProtKB"/>
</dbReference>
<dbReference type="GO" id="GO:0090170">
    <property type="term" value="P:regulation of Golgi inheritance"/>
    <property type="evidence" value="ECO:0000304"/>
    <property type="project" value="UniProtKB"/>
</dbReference>
<dbReference type="GO" id="GO:0030278">
    <property type="term" value="P:regulation of ossification"/>
    <property type="evidence" value="ECO:0000266"/>
    <property type="project" value="RGD"/>
</dbReference>
<dbReference type="GO" id="GO:0031647">
    <property type="term" value="P:regulation of protein stability"/>
    <property type="evidence" value="ECO:0000250"/>
    <property type="project" value="UniProtKB"/>
</dbReference>
<dbReference type="GO" id="GO:0032872">
    <property type="term" value="P:regulation of stress-activated MAPK cascade"/>
    <property type="evidence" value="ECO:0000304"/>
    <property type="project" value="UniProtKB"/>
</dbReference>
<dbReference type="GO" id="GO:0097305">
    <property type="term" value="P:response to alcohol"/>
    <property type="evidence" value="ECO:0000270"/>
    <property type="project" value="RGD"/>
</dbReference>
<dbReference type="GO" id="GO:0042220">
    <property type="term" value="P:response to cocaine"/>
    <property type="evidence" value="ECO:0000270"/>
    <property type="project" value="RGD"/>
</dbReference>
<dbReference type="GO" id="GO:0070849">
    <property type="term" value="P:response to epidermal growth factor"/>
    <property type="evidence" value="ECO:0000250"/>
    <property type="project" value="UniProtKB"/>
</dbReference>
<dbReference type="GO" id="GO:0032355">
    <property type="term" value="P:response to estradiol"/>
    <property type="evidence" value="ECO:0000270"/>
    <property type="project" value="RGD"/>
</dbReference>
<dbReference type="GO" id="GO:0043627">
    <property type="term" value="P:response to estrogen"/>
    <property type="evidence" value="ECO:0000314"/>
    <property type="project" value="RGD"/>
</dbReference>
<dbReference type="GO" id="GO:0043330">
    <property type="term" value="P:response to exogenous dsRNA"/>
    <property type="evidence" value="ECO:0000266"/>
    <property type="project" value="RGD"/>
</dbReference>
<dbReference type="GO" id="GO:0042542">
    <property type="term" value="P:response to hydrogen peroxide"/>
    <property type="evidence" value="ECO:0000270"/>
    <property type="project" value="RGD"/>
</dbReference>
<dbReference type="GO" id="GO:0032496">
    <property type="term" value="P:response to lipopolysaccharide"/>
    <property type="evidence" value="ECO:0000266"/>
    <property type="project" value="RGD"/>
</dbReference>
<dbReference type="GO" id="GO:0035094">
    <property type="term" value="P:response to nicotine"/>
    <property type="evidence" value="ECO:0000316"/>
    <property type="project" value="ARUK-UCL"/>
</dbReference>
<dbReference type="GO" id="GO:0033574">
    <property type="term" value="P:response to testosterone"/>
    <property type="evidence" value="ECO:0000270"/>
    <property type="project" value="RGD"/>
</dbReference>
<dbReference type="GO" id="GO:0009636">
    <property type="term" value="P:response to toxic substance"/>
    <property type="evidence" value="ECO:0000314"/>
    <property type="project" value="RGD"/>
</dbReference>
<dbReference type="GO" id="GO:0014044">
    <property type="term" value="P:Schwann cell development"/>
    <property type="evidence" value="ECO:0000266"/>
    <property type="project" value="RGD"/>
</dbReference>
<dbReference type="GO" id="GO:0019233">
    <property type="term" value="P:sensory perception of pain"/>
    <property type="evidence" value="ECO:0000315"/>
    <property type="project" value="UniProtKB"/>
</dbReference>
<dbReference type="GO" id="GO:0043401">
    <property type="term" value="P:steroid hormone receptor signaling pathway"/>
    <property type="evidence" value="ECO:0000266"/>
    <property type="project" value="RGD"/>
</dbReference>
<dbReference type="GO" id="GO:0051403">
    <property type="term" value="P:stress-activated MAPK cascade"/>
    <property type="evidence" value="ECO:0000266"/>
    <property type="project" value="RGD"/>
</dbReference>
<dbReference type="GO" id="GO:0050852">
    <property type="term" value="P:T cell receptor signaling pathway"/>
    <property type="evidence" value="ECO:0000266"/>
    <property type="project" value="RGD"/>
</dbReference>
<dbReference type="GO" id="GO:0048538">
    <property type="term" value="P:thymus development"/>
    <property type="evidence" value="ECO:0000266"/>
    <property type="project" value="RGD"/>
</dbReference>
<dbReference type="GO" id="GO:0030878">
    <property type="term" value="P:thyroid gland development"/>
    <property type="evidence" value="ECO:0000266"/>
    <property type="project" value="RGD"/>
</dbReference>
<dbReference type="GO" id="GO:0060440">
    <property type="term" value="P:trachea formation"/>
    <property type="evidence" value="ECO:0000266"/>
    <property type="project" value="RGD"/>
</dbReference>
<dbReference type="CDD" id="cd07849">
    <property type="entry name" value="STKc_ERK1_2_like"/>
    <property type="match status" value="1"/>
</dbReference>
<dbReference type="FunFam" id="1.10.510.10:FF:000624">
    <property type="entry name" value="Mitogen-activated protein kinase"/>
    <property type="match status" value="1"/>
</dbReference>
<dbReference type="FunFam" id="3.30.200.20:FF:000373">
    <property type="entry name" value="Mitogen-activated protein kinase 1"/>
    <property type="match status" value="1"/>
</dbReference>
<dbReference type="Gene3D" id="3.30.200.20">
    <property type="entry name" value="Phosphorylase Kinase, domain 1"/>
    <property type="match status" value="1"/>
</dbReference>
<dbReference type="Gene3D" id="1.10.510.10">
    <property type="entry name" value="Transferase(Phosphotransferase) domain 1"/>
    <property type="match status" value="1"/>
</dbReference>
<dbReference type="IDEAL" id="IID50321"/>
<dbReference type="InterPro" id="IPR011009">
    <property type="entry name" value="Kinase-like_dom_sf"/>
</dbReference>
<dbReference type="InterPro" id="IPR050117">
    <property type="entry name" value="MAP_kinase"/>
</dbReference>
<dbReference type="InterPro" id="IPR003527">
    <property type="entry name" value="MAP_kinase_CS"/>
</dbReference>
<dbReference type="InterPro" id="IPR008349">
    <property type="entry name" value="MAPK_ERK1/2"/>
</dbReference>
<dbReference type="InterPro" id="IPR000719">
    <property type="entry name" value="Prot_kinase_dom"/>
</dbReference>
<dbReference type="InterPro" id="IPR017441">
    <property type="entry name" value="Protein_kinase_ATP_BS"/>
</dbReference>
<dbReference type="InterPro" id="IPR008271">
    <property type="entry name" value="Ser/Thr_kinase_AS"/>
</dbReference>
<dbReference type="PANTHER" id="PTHR24055">
    <property type="entry name" value="MITOGEN-ACTIVATED PROTEIN KINASE"/>
    <property type="match status" value="1"/>
</dbReference>
<dbReference type="Pfam" id="PF00069">
    <property type="entry name" value="Pkinase"/>
    <property type="match status" value="1"/>
</dbReference>
<dbReference type="PRINTS" id="PR01770">
    <property type="entry name" value="ERK1ERK2MAPK"/>
</dbReference>
<dbReference type="SMART" id="SM00220">
    <property type="entry name" value="S_TKc"/>
    <property type="match status" value="1"/>
</dbReference>
<dbReference type="SUPFAM" id="SSF56112">
    <property type="entry name" value="Protein kinase-like (PK-like)"/>
    <property type="match status" value="1"/>
</dbReference>
<dbReference type="PROSITE" id="PS01351">
    <property type="entry name" value="MAPK"/>
    <property type="match status" value="1"/>
</dbReference>
<dbReference type="PROSITE" id="PS00107">
    <property type="entry name" value="PROTEIN_KINASE_ATP"/>
    <property type="match status" value="1"/>
</dbReference>
<dbReference type="PROSITE" id="PS50011">
    <property type="entry name" value="PROTEIN_KINASE_DOM"/>
    <property type="match status" value="1"/>
</dbReference>
<dbReference type="PROSITE" id="PS00108">
    <property type="entry name" value="PROTEIN_KINASE_ST"/>
    <property type="match status" value="1"/>
</dbReference>
<feature type="initiator methionine" description="Removed" evidence="16">
    <location>
        <position position="1"/>
    </location>
</feature>
<feature type="chain" id="PRO_0000186249" description="Mitogen-activated protein kinase 1">
    <location>
        <begin position="2"/>
        <end position="358"/>
    </location>
</feature>
<feature type="domain" description="Protein kinase" evidence="5">
    <location>
        <begin position="23"/>
        <end position="311"/>
    </location>
</feature>
<feature type="short sequence motif" description="TXY">
    <location>
        <begin position="183"/>
        <end position="185"/>
    </location>
</feature>
<feature type="active site" description="Proton acceptor">
    <location>
        <position position="147"/>
    </location>
</feature>
<feature type="binding site" evidence="5 15">
    <location>
        <begin position="29"/>
        <end position="37"/>
    </location>
    <ligand>
        <name>ATP</name>
        <dbReference type="ChEBI" id="CHEBI:30616"/>
    </ligand>
</feature>
<feature type="binding site" evidence="5 15">
    <location>
        <position position="52"/>
    </location>
    <ligand>
        <name>ATP</name>
        <dbReference type="ChEBI" id="CHEBI:30616"/>
    </ligand>
</feature>
<feature type="modified residue" description="N-acetylalanine" evidence="16">
    <location>
        <position position="2"/>
    </location>
</feature>
<feature type="modified residue" description="Phosphoserine; by SGK1" evidence="3">
    <location>
        <position position="27"/>
    </location>
</feature>
<feature type="modified residue" description="Phosphothreonine" evidence="22">
    <location>
        <position position="183"/>
    </location>
</feature>
<feature type="modified residue" description="Phosphotyrosine" evidence="22">
    <location>
        <position position="185"/>
    </location>
</feature>
<feature type="modified residue" description="Phosphothreonine; by autocatalysis" evidence="3">
    <location>
        <position position="188"/>
    </location>
</feature>
<feature type="modified residue" description="Phosphoserine" evidence="3">
    <location>
        <position position="244"/>
    </location>
</feature>
<feature type="modified residue" description="Phosphoserine" evidence="3">
    <location>
        <position position="246"/>
    </location>
</feature>
<feature type="modified residue" description="Phosphoserine" evidence="3">
    <location>
        <position position="282"/>
    </location>
</feature>
<feature type="mutagenesis site" description="Reduced affinity for DCC. Strongly reduced affinity for DCC; when associated with A-123." evidence="12">
    <original>Q</original>
    <variation>A</variation>
    <location>
        <position position="117"/>
    </location>
</feature>
<feature type="mutagenesis site" description="Reduced affinity for DCC. Strongly reduced affinity for DCC; when associated with A-117." evidence="12">
    <original>H</original>
    <variation>A</variation>
    <location>
        <position position="123"/>
    </location>
</feature>
<feature type="mutagenesis site" description="Reduced affinity for DCC." evidence="12">
    <original>L</original>
    <variation>A</variation>
    <location>
        <position position="155"/>
    </location>
</feature>
<feature type="strand" evidence="28">
    <location>
        <begin position="10"/>
        <end position="17"/>
    </location>
</feature>
<feature type="turn" evidence="27">
    <location>
        <begin position="20"/>
        <end position="22"/>
    </location>
</feature>
<feature type="strand" evidence="27">
    <location>
        <begin position="23"/>
        <end position="31"/>
    </location>
</feature>
<feature type="strand" evidence="27">
    <location>
        <begin position="33"/>
        <end position="42"/>
    </location>
</feature>
<feature type="turn" evidence="27">
    <location>
        <begin position="43"/>
        <end position="46"/>
    </location>
</feature>
<feature type="strand" evidence="27">
    <location>
        <begin position="47"/>
        <end position="54"/>
    </location>
</feature>
<feature type="strand" evidence="29">
    <location>
        <begin position="57"/>
        <end position="59"/>
    </location>
</feature>
<feature type="helix" evidence="27">
    <location>
        <begin position="60"/>
        <end position="75"/>
    </location>
</feature>
<feature type="strand" evidence="27">
    <location>
        <begin position="86"/>
        <end position="88"/>
    </location>
</feature>
<feature type="turn" evidence="27">
    <location>
        <begin position="93"/>
        <end position="95"/>
    </location>
</feature>
<feature type="strand" evidence="27">
    <location>
        <begin position="99"/>
        <end position="104"/>
    </location>
</feature>
<feature type="strand" evidence="27">
    <location>
        <begin position="107"/>
        <end position="109"/>
    </location>
</feature>
<feature type="helix" evidence="27">
    <location>
        <begin position="110"/>
        <end position="116"/>
    </location>
</feature>
<feature type="helix" evidence="27">
    <location>
        <begin position="121"/>
        <end position="140"/>
    </location>
</feature>
<feature type="helix" evidence="27">
    <location>
        <begin position="150"/>
        <end position="152"/>
    </location>
</feature>
<feature type="strand" evidence="27">
    <location>
        <begin position="153"/>
        <end position="155"/>
    </location>
</feature>
<feature type="strand" evidence="27">
    <location>
        <begin position="161"/>
        <end position="163"/>
    </location>
</feature>
<feature type="strand" evidence="25">
    <location>
        <begin position="170"/>
        <end position="172"/>
    </location>
</feature>
<feature type="helix" evidence="27">
    <location>
        <begin position="174"/>
        <end position="176"/>
    </location>
</feature>
<feature type="turn" evidence="24">
    <location>
        <begin position="179"/>
        <end position="181"/>
    </location>
</feature>
<feature type="helix" evidence="25">
    <location>
        <begin position="182"/>
        <end position="184"/>
    </location>
</feature>
<feature type="helix" evidence="27">
    <location>
        <begin position="189"/>
        <end position="191"/>
    </location>
</feature>
<feature type="helix" evidence="27">
    <location>
        <begin position="194"/>
        <end position="196"/>
    </location>
</feature>
<feature type="turn" evidence="27">
    <location>
        <begin position="197"/>
        <end position="199"/>
    </location>
</feature>
<feature type="turn" evidence="30">
    <location>
        <begin position="200"/>
        <end position="202"/>
    </location>
</feature>
<feature type="helix" evidence="27">
    <location>
        <begin position="206"/>
        <end position="221"/>
    </location>
</feature>
<feature type="helix" evidence="27">
    <location>
        <begin position="231"/>
        <end position="242"/>
    </location>
</feature>
<feature type="helix" evidence="27">
    <location>
        <begin position="247"/>
        <end position="251"/>
    </location>
</feature>
<feature type="helix" evidence="27">
    <location>
        <begin position="256"/>
        <end position="264"/>
    </location>
</feature>
<feature type="helix" evidence="27">
    <location>
        <begin position="273"/>
        <end position="276"/>
    </location>
</feature>
<feature type="strand" evidence="24">
    <location>
        <begin position="278"/>
        <end position="280"/>
    </location>
</feature>
<feature type="helix" evidence="27">
    <location>
        <begin position="282"/>
        <end position="291"/>
    </location>
</feature>
<feature type="turn" evidence="27">
    <location>
        <begin position="296"/>
        <end position="298"/>
    </location>
</feature>
<feature type="helix" evidence="27">
    <location>
        <begin position="302"/>
        <end position="306"/>
    </location>
</feature>
<feature type="helix" evidence="27">
    <location>
        <begin position="309"/>
        <end position="311"/>
    </location>
</feature>
<feature type="turn" evidence="27">
    <location>
        <begin position="312"/>
        <end position="314"/>
    </location>
</feature>
<feature type="helix" evidence="27">
    <location>
        <begin position="317"/>
        <end position="319"/>
    </location>
</feature>
<feature type="helix" evidence="26">
    <location>
        <begin position="331"/>
        <end position="333"/>
    </location>
</feature>
<feature type="strand" evidence="31">
    <location>
        <begin position="334"/>
        <end position="336"/>
    </location>
</feature>
<feature type="helix" evidence="27">
    <location>
        <begin position="338"/>
        <end position="348"/>
    </location>
</feature>
<feature type="helix" evidence="27">
    <location>
        <begin position="350"/>
        <end position="352"/>
    </location>
</feature>
<feature type="helix" evidence="23">
    <location>
        <begin position="354"/>
        <end position="356"/>
    </location>
</feature>
<gene>
    <name evidence="21" type="primary">Mapk1</name>
    <name type="synonym">Erk2</name>
    <name type="synonym">Mapk</name>
    <name type="synonym">Prkm1</name>
</gene>
<keyword id="KW-0002">3D-structure</keyword>
<keyword id="KW-0007">Acetylation</keyword>
<keyword id="KW-0053">Apoptosis</keyword>
<keyword id="KW-0067">ATP-binding</keyword>
<keyword id="KW-0131">Cell cycle</keyword>
<keyword id="KW-0965">Cell junction</keyword>
<keyword id="KW-0963">Cytoplasm</keyword>
<keyword id="KW-0206">Cytoskeleton</keyword>
<keyword id="KW-0903">Direct protein sequencing</keyword>
<keyword id="KW-0418">Kinase</keyword>
<keyword id="KW-0472">Membrane</keyword>
<keyword id="KW-0547">Nucleotide-binding</keyword>
<keyword id="KW-0539">Nucleus</keyword>
<keyword id="KW-0597">Phosphoprotein</keyword>
<keyword id="KW-1185">Reference proteome</keyword>
<keyword id="KW-0723">Serine/threonine-protein kinase</keyword>
<keyword id="KW-0808">Transferase</keyword>
<keyword id="KW-0832">Ubl conjugation</keyword>
<reference key="1">
    <citation type="journal article" date="1991" name="Cell">
        <title>ERKs: a family of protein-serine/threonine kinases that are activated and tyrosine phosphorylated in response to insulin and NGF.</title>
        <authorList>
            <person name="Boulton T.G."/>
            <person name="Nye S.H."/>
            <person name="Robbins D.J."/>
            <person name="Ip N.Y."/>
            <person name="Radziejewska E."/>
            <person name="Morgenbesser S.D."/>
            <person name="DePinho R.A."/>
            <person name="Panayotatos N."/>
            <person name="Cobb M.H."/>
            <person name="Yancopoulos G.D."/>
        </authorList>
    </citation>
    <scope>NUCLEOTIDE SEQUENCE [MRNA]</scope>
    <source>
        <strain>Sprague-Dawley</strain>
        <tissue>Brain</tissue>
    </source>
</reference>
<reference key="2">
    <citation type="submission" date="2006-08" db="UniProtKB">
        <authorList>
            <person name="Bienvenut W.V."/>
            <person name="von Kriegsheim A.F."/>
            <person name="Kolch W."/>
        </authorList>
    </citation>
    <scope>PROTEIN SEQUENCE OF 2-13; 69-75; 137-170; 193-201 AND 341-351</scope>
    <scope>CLEAVAGE OF INITIATOR METHIONINE</scope>
    <scope>ACETYLATION AT ALA-2</scope>
    <scope>IDENTIFICATION BY MASS SPECTROMETRY</scope>
    <source>
        <tissue>Pheochromocytoma</tissue>
    </source>
</reference>
<reference key="3">
    <citation type="submission" date="2007-07" db="UniProtKB">
        <authorList>
            <person name="Lubec G."/>
            <person name="Kang S.U."/>
        </authorList>
    </citation>
    <scope>PROTEIN SEQUENCE OF 163-170</scope>
    <scope>IDENTIFICATION BY MASS SPECTROMETRY</scope>
    <source>
        <strain>Sprague-Dawley</strain>
        <tissue>Brain</tissue>
    </source>
</reference>
<reference key="4">
    <citation type="journal article" date="1991" name="Proc. Natl. Acad. Sci. U.S.A.">
        <title>Microtubule-associated protein 2 kinases, ERK1 and ERK2, undergo autophosphorylation on both tyrosine and threonine residues: implications for their mechanism of activation.</title>
        <authorList>
            <person name="Seger R."/>
            <person name="Ahn N.G."/>
            <person name="Boulton T.G."/>
            <person name="Yancopoulos G.D."/>
            <person name="Panayotatos N."/>
            <person name="Radziejewska E."/>
            <person name="Ericsson L."/>
            <person name="Bratlien R.L."/>
            <person name="Cobb M.H."/>
            <person name="Krebs E.G."/>
        </authorList>
    </citation>
    <scope>AUTOPHOSPHORYLATION</scope>
</reference>
<reference key="5">
    <citation type="journal article" date="1994" name="Science">
        <title>PHAS-I as a link between mitogen-activated protein kinase and translation initiation.</title>
        <authorList>
            <person name="Lin T.-A."/>
            <person name="Kong X."/>
            <person name="Haystead T.A.J."/>
            <person name="Pause A."/>
            <person name="Belsham G.J."/>
            <person name="Sonenberg N."/>
            <person name="Lawrence J.C. Jr."/>
        </authorList>
    </citation>
    <scope>PHOSPHORYLATION OF EIF4EBP1</scope>
</reference>
<reference key="6">
    <citation type="journal article" date="2001" name="Proc. Natl. Acad. Sci. U.S.A.">
        <title>Activation and targeting of extracellular signal-regulated kinases by beta-arrestin scaffolds.</title>
        <authorList>
            <person name="Luttrell L.M."/>
            <person name="Roudabush F.L."/>
            <person name="Choy E.W."/>
            <person name="Miller W.E."/>
            <person name="Field M.E."/>
            <person name="Pierce K.L."/>
            <person name="Lefkowitz R.J."/>
        </authorList>
    </citation>
    <scope>INTERACTION WITH ARRB2</scope>
</reference>
<reference key="7">
    <citation type="journal article" date="2003" name="Development">
        <title>DOC1R: a MAP kinase substrate that control microtubule organization of metaphase II mouse oocytes.</title>
        <authorList>
            <person name="Terret M.E."/>
            <person name="Lefebvre C."/>
            <person name="Djiane A."/>
            <person name="Rassinier P."/>
            <person name="Moreau J."/>
            <person name="Maro B."/>
            <person name="Verlhac M.H."/>
        </authorList>
    </citation>
    <scope>FUNCTION</scope>
    <scope>INTERACTION WITH CDK2AP2</scope>
</reference>
<reference key="8">
    <citation type="journal article" date="2005" name="J. Biol. Chem.">
        <title>GIT1 is a scaffold for ERK1/2 activation in focal adhesions.</title>
        <authorList>
            <person name="Yin G."/>
            <person name="Zheng Q."/>
            <person name="Yan C."/>
            <person name="Berk B.C."/>
        </authorList>
    </citation>
    <scope>INTERACTION WITH GIT1</scope>
</reference>
<reference key="9">
    <citation type="journal article" date="2006" name="Proc. Natl. Acad. Sci. U.S.A.">
        <title>Quantitative phosphoproteomics of vasopressin-sensitive renal cells: regulation of aquaporin-2 phosphorylation at two sites.</title>
        <authorList>
            <person name="Hoffert J.D."/>
            <person name="Pisitkun T."/>
            <person name="Wang G."/>
            <person name="Shen R.-F."/>
            <person name="Knepper M.A."/>
        </authorList>
    </citation>
    <scope>IDENTIFICATION BY MASS SPECTROMETRY [LARGE SCALE ANALYSIS]</scope>
</reference>
<reference key="10">
    <citation type="journal article" date="2009" name="J. Cell. Mol. Med.">
        <title>Identification of pY19-caveolin-2 as a positive regulator of insulin-stimulated actin cytoskeleton-dependent mitogenesis.</title>
        <authorList>
            <person name="Kwon H."/>
            <person name="Jeong K."/>
            <person name="Pak Y."/>
        </authorList>
    </citation>
    <scope>INTERACTION WITH CAV2</scope>
</reference>
<reference key="11">
    <citation type="journal article" date="2009" name="Biochim. Biophys. Acta">
        <title>Caveolin-2 regulation of STAT3 transcriptional activation in response to insulin.</title>
        <authorList>
            <person name="Kwon H."/>
            <person name="Jeong K."/>
            <person name="Hwang E.M."/>
            <person name="Park J.-Y."/>
            <person name="Hong S.-G."/>
            <person name="Choi W.-S."/>
            <person name="Pak Y."/>
        </authorList>
    </citation>
    <scope>INTERACTION WITH CAV2</scope>
</reference>
<reference key="12">
    <citation type="journal article" date="2006" name="Growth Factors">
        <title>The extracellular signal-regulated kinase: multiple substrates regulate diverse cellular functions.</title>
        <authorList>
            <person name="Yoon S."/>
            <person name="Seger R."/>
        </authorList>
    </citation>
    <scope>REVIEW ON FUNCTION</scope>
</reference>
<reference key="13">
    <citation type="journal article" date="2009" name="BioFactors">
        <title>The ERK signaling cascade--views from different subcellular compartments.</title>
        <authorList>
            <person name="Yao Z."/>
            <person name="Seger R."/>
        </authorList>
    </citation>
    <scope>REVIEW ON FUNCTION</scope>
    <scope>REVIEW ON SUBCELLULAR LOCATION</scope>
</reference>
<reference key="14">
    <citation type="journal article" date="2011" name="Genes Cancer">
        <title>The ERK cascade: distinct functions within various subcellular organelles.</title>
        <authorList>
            <person name="Wortzel I."/>
            <person name="Seger R."/>
        </authorList>
    </citation>
    <scope>REVIEW ON ACTIVITY REGULATION</scope>
    <scope>REVIEW ON FUNCTION</scope>
</reference>
<reference key="15">
    <citation type="journal article" date="2012" name="Nat. Commun.">
        <title>Quantitative maps of protein phosphorylation sites across 14 different rat organs and tissues.</title>
        <authorList>
            <person name="Lundby A."/>
            <person name="Secher A."/>
            <person name="Lage K."/>
            <person name="Nordsborg N.B."/>
            <person name="Dmytriyev A."/>
            <person name="Lundby C."/>
            <person name="Olsen J.V."/>
        </authorList>
    </citation>
    <scope>PHOSPHORYLATION [LARGE SCALE ANALYSIS] AT THR-183 AND TYR-185</scope>
    <scope>IDENTIFICATION BY MASS SPECTROMETRY [LARGE SCALE ANALYSIS]</scope>
</reference>
<reference key="16">
    <citation type="journal article" date="2014" name="Proc. Natl. Acad. Sci. U.S.A.">
        <title>MURC/Cavin-4 facilitates recruitment of ERK to caveolae and concentric cardiac hypertrophy induced by alpha1-adrenergic receptors.</title>
        <authorList>
            <person name="Ogata T."/>
            <person name="Naito D."/>
            <person name="Nakanishi N."/>
            <person name="Hayashi Y.K."/>
            <person name="Taniguchi T."/>
            <person name="Miyagawa K."/>
            <person name="Hamaoka T."/>
            <person name="Maruyama N."/>
            <person name="Matoba S."/>
            <person name="Ikeda K."/>
            <person name="Yamada H."/>
            <person name="Oh H."/>
            <person name="Ueyama T."/>
        </authorList>
    </citation>
    <scope>SUBCELLULAR LOCATION</scope>
    <scope>INTERACTION WITH CAVIN4</scope>
</reference>
<reference key="17">
    <citation type="journal article" date="2016" name="Cell Rep.">
        <title>The phosphatase Dusp7 drives meiotic resumption and chromosome alignment in mouse oocytes.</title>
        <authorList>
            <person name="Tischer T."/>
            <person name="Schuh M."/>
        </authorList>
    </citation>
    <scope>INTERACTION WITH DUSP7</scope>
</reference>
<reference key="18">
    <citation type="journal article" date="1994" name="Nature">
        <title>Atomic structure of the MAP kinase ERK2 at 2.3-A resolution.</title>
        <authorList>
            <person name="Zhang F."/>
            <person name="Strand A."/>
            <person name="Robbins D."/>
            <person name="Cobb M.H."/>
            <person name="Goldsmith E.J."/>
        </authorList>
    </citation>
    <scope>X-RAY CRYSTALLOGRAPHY (2.3 ANGSTROMS)</scope>
</reference>
<reference key="19">
    <citation type="journal article" date="1996" name="Biochemistry">
        <title>Mutation of position 52 in ERK2 creates a nonproductive binding mode for adenosine 5'-triphosphate.</title>
        <authorList>
            <person name="Robinson M.J."/>
            <person name="Harkins P.C."/>
            <person name="Zhang J."/>
            <person name="Baer R."/>
            <person name="Haycock J.W."/>
            <person name="Cobb M.H."/>
            <person name="Goldsmith E.J."/>
        </authorList>
    </citation>
    <scope>X-RAY CRYSTALLOGRAPHY (2.80 ANGSTROMS) IN COMPLEX WITH ATP</scope>
</reference>
<reference key="20">
    <citation type="journal article" date="1997" name="Cell">
        <title>Activation mechanism of the MAP kinase ERK2 by dual phosphorylation.</title>
        <authorList>
            <person name="Canagarajah B.J."/>
            <person name="Khokhlatchev A."/>
            <person name="Cobb M.H."/>
            <person name="Goldsmith E.J."/>
        </authorList>
    </citation>
    <scope>X-RAY CRYSTALLOGRAPHY (2.4 ANGSTROMS)</scope>
</reference>
<reference key="21">
    <citation type="journal article" date="1998" name="Structure">
        <title>Structural basis of inhibitor selectivity in MAP kinases.</title>
        <authorList>
            <person name="Wang Z."/>
            <person name="Canagarajah B.J."/>
            <person name="Boehm J.C."/>
            <person name="Kassisa S."/>
            <person name="Cobb M.H."/>
            <person name="Young P.R."/>
            <person name="Abdel-Meguid S."/>
            <person name="Adams J.L."/>
            <person name="Goldsmith E.J."/>
        </authorList>
    </citation>
    <scope>X-RAY CRYSTALLOGRAPHY (2.10 ANGSTROMS) IN COMPLEX WITH INHIBITOR</scope>
</reference>
<reference key="22">
    <citation type="journal article" date="2006" name="Proc. Natl. Acad. Sci. U.S.A.">
        <title>Structural basis of docking interactions between ERK2 and MAP kinase phosphatase 3.</title>
        <authorList>
            <person name="Liu S."/>
            <person name="Sun J.P."/>
            <person name="Zhou B."/>
            <person name="Zhang Z.Y."/>
        </authorList>
    </citation>
    <scope>X-RAY CRYSTALLOGRAPHY (2.50 ANGSTROMS) OF 2-357</scope>
    <scope>INTERACTION WITH DUSP6</scope>
</reference>
<reference key="23">
    <citation type="journal article" date="2006" name="Structure">
        <title>Docking interactions induce exposure of activation loop in the MAP kinase ERK2.</title>
        <authorList>
            <person name="Zhou T."/>
            <person name="Sun L."/>
            <person name="Humphreys J."/>
            <person name="Goldsmith E.J."/>
        </authorList>
    </citation>
    <scope>X-RAY CRYSTALLOGRAPHY (1.90 ANGSTROMS) OF 2-357</scope>
</reference>
<reference key="24">
    <citation type="journal article" date="2008" name="J. Struct. Biol.">
        <title>Molecular modeling and crystal structure of ERK2-hypothemycin complexes.</title>
        <authorList>
            <person name="Rastelli G."/>
            <person name="Rosenfeld R."/>
            <person name="Reid R."/>
            <person name="Santi D.V."/>
        </authorList>
    </citation>
    <scope>X-RAY CRYSTALLOGRAPHY (2.50 ANGSTROMS) OF 2-358 IN COMPLEX WITH INHIBITOR</scope>
</reference>
<reference key="25">
    <citation type="journal article" date="2008" name="Proteins">
        <title>Identification of a key element for hydrogen-bonding patterns between protein kinases and their inhibitors.</title>
        <authorList>
            <person name="Katayama N."/>
            <person name="Orita M."/>
            <person name="Yamaguchi T."/>
            <person name="Hisamichi H."/>
            <person name="Kuromitsu S."/>
            <person name="Kurihara H."/>
            <person name="Sakashita H."/>
            <person name="Matsumoto Y."/>
            <person name="Fujita S."/>
            <person name="Niimi T."/>
        </authorList>
    </citation>
    <scope>X-RAY CRYSTALLOGRAPHY (2.41 ANGSTROMS) IN COMPLEX WITH INHIBITOR</scope>
</reference>
<reference key="26">
    <citation type="journal article" date="2010" name="Structure">
        <title>Phosphorylation of DCC by ERK2 is facilitated by direct docking of the receptor P1 domain to the kinase.</title>
        <authorList>
            <person name="Ma W."/>
            <person name="Shang Y."/>
            <person name="Wei Z."/>
            <person name="Wen W."/>
            <person name="Wang W."/>
            <person name="Zhang M."/>
        </authorList>
    </citation>
    <scope>X-RAY CRYSTALLOGRAPHY (1.95 ANGSTROMS) IN COMPLEX WITH DCC</scope>
    <scope>FUNCTION IN PHOSPHORYLATION OF DCC</scope>
    <scope>INTERACTION WITH DCC</scope>
    <scope>MUTAGENESIS OF GLN-117; HIS-123 AND LEU-155</scope>
</reference>
<comment type="function">
    <text evidence="3 7 12 17 18 19">Serine/threonine kinase which acts as an essential component of the MAP kinase signal transduction pathway. MAPK1/ERK2 and MAPK3/ERK1 are the 2 MAPKs which play an important role in the MAPK/ERK cascade. They participate also in a signaling cascade initiated by activated KIT and KITLG/SCF. Depending on the cellular context, the MAPK/ERK cascade mediates diverse biological functions such as cell growth, adhesion, survival and differentiation through the regulation of transcription, translation, cytoskeletal rearrangements. The MAPK/ERK cascade also plays a role in initiation and regulation of meiosis, mitosis, and postmitotic functions in differentiated cells by phosphorylating a number of transcription factors. About 160 substrates have already been discovered for ERKs. Many of these substrates are localized in the nucleus, and seem to participate in the regulation of transcription upon stimulation. However, other substrates are found in the cytosol as well as in other cellular organelles, and those are responsible for processes such as translation, mitosis and apoptosis. Moreover, the MAPK/ERK cascade is also involved in the regulation of the endosomal dynamics, including lysosome processing and endosome cycling through the perinuclear recycling compartment (PNRC); as well as in the fragmentation of the Golgi apparatus during mitosis. The substrates include transcription factors (such as ATF2, BCL6, ELK1, ERF, FOS, HSF4 or SPZ1), cytoskeletal elements (such as CANX, CTTN, GJA1, MAP2, MAPT, PXN, SORBS3 or STMN1), regulators of apoptosis (such as BAD, BTG2, CASP9, DAPK1, IER3, MCL1 or PPARG), regulators of translation (such as EIF4EBP1 and FXR1) and a variety of other signaling-related molecules (like ARHGEF2, DCC, FRS2 or GRB10). Protein kinases (such as RAF1, RPS6KA1/RSK1, RPS6KA3/RSK2, RPS6KA2/RSK3, RPS6KA6/RSK4, SYK, MKNK1/MNK1, MKNK2/MNK2, RPS6KA5/MSK1, RPS6KA4/MSK2, MAPKAPK3 or MAPKAPK5) and phosphatases (such as DUSP1, DUSP4, DUSP6 or DUSP16) are other substrates which enable the propagation the MAPK/ERK signal to additional cytosolic and nuclear targets, thereby extending the specificity of the cascade. Mediates phosphorylation of TPR in response to EGF stimulation. May play a role in the spindle assembly checkpoint. Phosphorylates PML and promotes its interaction with PIN1, leading to PML degradation (By similarity). Phosphorylates CDK2AP2 (PubMed:12944431). Phosphorylates phosphoglycerate kinase PGK1 under hypoxic conditions to promote its targeting to the mitochondrion and suppress the formation of acetyl-coenzyme A from pyruvate (By similarity).</text>
</comment>
<comment type="function">
    <text evidence="3">Acts as a transcriptional repressor. Binds to a [GC]AAA[GC] consensus sequence. Repress the expression of interferon gamma-induced genes. Seems to bind to the promoter of CCL5, DMP1, IFIH1, IFITM1, IRF7, IRF9, LAMP3, OAS1, OAS2, OAS3 and STAT1. Transcriptional activity is independent of kinase activity.</text>
</comment>
<comment type="catalytic activity">
    <reaction evidence="3">
        <text>L-seryl-[protein] + ATP = O-phospho-L-seryl-[protein] + ADP + H(+)</text>
        <dbReference type="Rhea" id="RHEA:17989"/>
        <dbReference type="Rhea" id="RHEA-COMP:9863"/>
        <dbReference type="Rhea" id="RHEA-COMP:11604"/>
        <dbReference type="ChEBI" id="CHEBI:15378"/>
        <dbReference type="ChEBI" id="CHEBI:29999"/>
        <dbReference type="ChEBI" id="CHEBI:30616"/>
        <dbReference type="ChEBI" id="CHEBI:83421"/>
        <dbReference type="ChEBI" id="CHEBI:456216"/>
        <dbReference type="EC" id="2.7.11.24"/>
    </reaction>
</comment>
<comment type="catalytic activity">
    <reaction>
        <text>L-threonyl-[protein] + ATP = O-phospho-L-threonyl-[protein] + ADP + H(+)</text>
        <dbReference type="Rhea" id="RHEA:46608"/>
        <dbReference type="Rhea" id="RHEA-COMP:11060"/>
        <dbReference type="Rhea" id="RHEA-COMP:11605"/>
        <dbReference type="ChEBI" id="CHEBI:15378"/>
        <dbReference type="ChEBI" id="CHEBI:30013"/>
        <dbReference type="ChEBI" id="CHEBI:30616"/>
        <dbReference type="ChEBI" id="CHEBI:61977"/>
        <dbReference type="ChEBI" id="CHEBI:456216"/>
        <dbReference type="EC" id="2.7.11.24"/>
    </reaction>
</comment>
<comment type="cofactor">
    <cofactor evidence="1">
        <name>Mg(2+)</name>
        <dbReference type="ChEBI" id="CHEBI:18420"/>
    </cofactor>
</comment>
<comment type="activity regulation">
    <text>Phosphorylated by MAP2K1/MEK1 and MAP2K2/MEK2 on Thr-183 and Tyr-185 in response to external stimuli like insulin or NGF. Both phosphorylations are required for activity. This phosphorylation causes dramatic conformational changes, which enable full activation and interaction of MAPK1/ERK2 with its substrates. Phosphorylation on Ser-27 by SGK1 results in its activation by enhancing its interaction with MAP2K1/MEK1 and MAP2K2/MEK2. Dephosphorylated and inactivated by DUSP1, DUSP3, DUSP6 and DUSP9. Inactivated by pyrimidylpyrrole inhibitors.</text>
</comment>
<comment type="subunit">
    <text evidence="3 4 6 7 8 9 10 11 12 13 14">Binds both upstream activators and downstream substrates in multimolecular complexes. Interacts with ADAM15, ARHGEF2, DAPK1 (via death domain), HSF4, IER3, IPO7, MKNK2, MORG1, NISCH, PEA15, SGK1, and isoform 1 of NEK2 (By similarity). Interacts (via phosphorylated form) with TPR (via C-terminal region and phosphorylated form); the interaction requires dimerization of MAPK1/ERK2 and increases following EGF stimulation (By similarity). Interacts with MAP2K1 (By similarity). Interacts with DUSP6 (PubMed:16567630). Interacts with ARRB2 (PubMed:11226259). Interacts (phosphorylated form) with CAV2 ('Tyr-19'-phosphorylated form); the interaction, promoted by insulin, leads to nuclear location and MAPK1 activation (PubMed:19427337, PubMed:19778377). MKNK2 isoform 1 binding prevents from dephosphorylation and inactivation (By similarity). Interacts with DCC (PubMed:21070949). The phosphorylated form interacts with PML (By similarity). Interacts with STYX (By similarity). Interacts with CDK2AP2 (PubMed:12944431). Interacts with CAVIN4 (PubMed:24567387). Interacts with DUSP7; the interaction enhances DUSP7 phosphatase activity (PubMed:27783954). Interacts with GIT1; this interaction is necessary for MAPK1 localization to focal adhesions (PubMed:15923189). Interacts with ZNF263 (By similarity). Interacts with phosphoglycerate kinase PGK1; the interaction is direct, occurs under hypoxic conditions, and promotes interaction between PGK1 and PIN1 (By similarity).</text>
</comment>
<comment type="interaction">
    <interactant intactId="EBI-397710">
        <id>P63086</id>
    </interactant>
    <interactant intactId="EBI-1798965">
        <id>Q63155</id>
        <label>Dcc</label>
    </interactant>
    <organismsDiffer>false</organismsDiffer>
    <experiments>10</experiments>
</comment>
<comment type="subcellular location">
    <subcellularLocation>
        <location evidence="1">Cytoplasm</location>
        <location evidence="1">Cytoskeleton</location>
        <location evidence="1">Spindle</location>
    </subcellularLocation>
    <subcellularLocation>
        <location evidence="1">Nucleus</location>
    </subcellularLocation>
    <subcellularLocation>
        <location evidence="1">Cytoplasm</location>
        <location evidence="1">Cytoskeleton</location>
        <location evidence="1">Microtubule organizing center</location>
        <location evidence="1">Centrosome</location>
    </subcellularLocation>
    <subcellularLocation>
        <location evidence="13">Cytoplasm</location>
    </subcellularLocation>
    <subcellularLocation>
        <location evidence="13">Membrane</location>
        <location evidence="13">Caveola</location>
    </subcellularLocation>
    <subcellularLocation>
        <location evidence="4">Cell junction</location>
        <location evidence="4">Focal adhesion</location>
    </subcellularLocation>
    <text evidence="1">Associated with the spindle during prometaphase and metaphase. PEA15-binding and phosphorylated DAPK1 promote its cytoplasmic retention. Phosphorylation at Ser- 244 and Ser-246 as well as autophosphorylation at Thr-188 promote nuclear localization.</text>
</comment>
<comment type="tissue specificity">
    <text>Highest levels within the nervous system, expressed in different tissues, mostly in muscle, thymus and heart.</text>
</comment>
<comment type="developmental stage">
    <text>Increased expression during development.</text>
</comment>
<comment type="domain">
    <text>The TXY motif contains the threonine and tyrosine residues whose phosphorylation activates the MAP kinases.</text>
</comment>
<comment type="PTM">
    <text evidence="3 4">Dually phosphorylated on Thr-183 and Tyr-185, which activates the enzyme. Phosphorylated upon FLT3 and KIT signaling. Ligand-activated ALK induces tyrosine phosphorylation (By similarity). Dephosphorylated by PTPRJ at Tyr-185 (By similarity). Autophosphorylated on threonine and tyrosine residues in vitro, which correlates with a slow and low level of activation. Phosphorylation on Ser-27 by SGK1 results in its activation by enhancing its interaction with MAP2K1/MEK1 and MAP2K2/MEK2 (By similarity). Dephosphorylated by DUSP1 and DUSP2 at Thr-183 and Tyr-185 (By similarity).</text>
</comment>
<comment type="PTM">
    <text evidence="1">ISGylated.</text>
</comment>
<comment type="PTM">
    <text evidence="2">Ubiquitinated by TRIM15 via 'Lys-63'-linked ubiquitination; leading to activation. Deubiquitinated by CYLD.</text>
</comment>
<comment type="similarity">
    <text evidence="20">Belongs to the protein kinase superfamily. CMGC Ser/Thr protein kinase family. MAP kinase subfamily.</text>
</comment>
<evidence type="ECO:0000250" key="1"/>
<evidence type="ECO:0000250" key="2">
    <source>
        <dbReference type="UniProtKB" id="P27361"/>
    </source>
</evidence>
<evidence type="ECO:0000250" key="3">
    <source>
        <dbReference type="UniProtKB" id="P28482"/>
    </source>
</evidence>
<evidence type="ECO:0000250" key="4">
    <source>
        <dbReference type="UniProtKB" id="P63085"/>
    </source>
</evidence>
<evidence type="ECO:0000255" key="5">
    <source>
        <dbReference type="PROSITE-ProRule" id="PRU00159"/>
    </source>
</evidence>
<evidence type="ECO:0000269" key="6">
    <source>
    </source>
</evidence>
<evidence type="ECO:0000269" key="7">
    <source>
    </source>
</evidence>
<evidence type="ECO:0000269" key="8">
    <source>
    </source>
</evidence>
<evidence type="ECO:0000269" key="9">
    <source>
    </source>
</evidence>
<evidence type="ECO:0000269" key="10">
    <source>
    </source>
</evidence>
<evidence type="ECO:0000269" key="11">
    <source>
    </source>
</evidence>
<evidence type="ECO:0000269" key="12">
    <source>
    </source>
</evidence>
<evidence type="ECO:0000269" key="13">
    <source>
    </source>
</evidence>
<evidence type="ECO:0000269" key="14">
    <source>
    </source>
</evidence>
<evidence type="ECO:0000269" key="15">
    <source>
    </source>
</evidence>
<evidence type="ECO:0000269" key="16">
    <source ref="2"/>
</evidence>
<evidence type="ECO:0000303" key="17">
    <source>
    </source>
</evidence>
<evidence type="ECO:0000303" key="18">
    <source>
    </source>
</evidence>
<evidence type="ECO:0000303" key="19">
    <source>
    </source>
</evidence>
<evidence type="ECO:0000305" key="20"/>
<evidence type="ECO:0000312" key="21">
    <source>
        <dbReference type="RGD" id="70500"/>
    </source>
</evidence>
<evidence type="ECO:0007744" key="22">
    <source>
    </source>
</evidence>
<evidence type="ECO:0007829" key="23">
    <source>
        <dbReference type="PDB" id="1GOL"/>
    </source>
</evidence>
<evidence type="ECO:0007829" key="24">
    <source>
        <dbReference type="PDB" id="2ERK"/>
    </source>
</evidence>
<evidence type="ECO:0007829" key="25">
    <source>
        <dbReference type="PDB" id="3O71"/>
    </source>
</evidence>
<evidence type="ECO:0007829" key="26">
    <source>
        <dbReference type="PDB" id="4N4S"/>
    </source>
</evidence>
<evidence type="ECO:0007829" key="27">
    <source>
        <dbReference type="PDB" id="4S32"/>
    </source>
</evidence>
<evidence type="ECO:0007829" key="28">
    <source>
        <dbReference type="PDB" id="5HD4"/>
    </source>
</evidence>
<evidence type="ECO:0007829" key="29">
    <source>
        <dbReference type="PDB" id="6FXV"/>
    </source>
</evidence>
<evidence type="ECO:0007829" key="30">
    <source>
        <dbReference type="PDB" id="6OPK"/>
    </source>
</evidence>
<evidence type="ECO:0007829" key="31">
    <source>
        <dbReference type="PDB" id="6OT6"/>
    </source>
</evidence>
<name>MK01_RAT</name>
<proteinExistence type="evidence at protein level"/>
<protein>
    <recommendedName>
        <fullName evidence="20">Mitogen-activated protein kinase 1</fullName>
        <shortName>MAP kinase 1</shortName>
        <shortName>MAPK 1</shortName>
        <ecNumber evidence="3">2.7.11.24</ecNumber>
    </recommendedName>
    <alternativeName>
        <fullName>ERT1</fullName>
    </alternativeName>
    <alternativeName>
        <fullName>Extracellular signal-regulated kinase 2</fullName>
        <shortName>ERK-2</shortName>
    </alternativeName>
    <alternativeName>
        <fullName>MAP kinase isoform p42</fullName>
        <shortName>p42-MAPK</shortName>
    </alternativeName>
    <alternativeName>
        <fullName>Mitogen-activated protein kinase 2</fullName>
        <shortName>MAP kinase 2</shortName>
        <shortName>MAPK 2</shortName>
    </alternativeName>
</protein>
<sequence length="358" mass="41276">MAAAAAAGPEMVRGQVFDVGPRYTNLSYIGEGAYGMVCSAYDNLNKVRVAIKKISPFEHQTYCQRTLREIKILLRFRHENIIGINDIIRAPTIEQMKDVYIVQDLMETDLYKLLKTQHLSNDHICYFLYQILRGLKYIHSANVLHRDLKPSNLLLNTTCDLKICDFGLARVADPDHDHTGFLTEYVATRWYRAPEIMLNSKGYTKSIDIWSVGCILAEMLSNRPIFPGKHYLDQLNHILGILGSPSQEDLNCIINLKARNYLLSLPHKNKVPWNRLFPNADSKALDLLDKMLTFNPHKRIEVEQALAHPYLEQYYDPSDEPIAEAPFKFDMELDDLPKEKLKELIFEETARFQPGYRS</sequence>
<organism>
    <name type="scientific">Rattus norvegicus</name>
    <name type="common">Rat</name>
    <dbReference type="NCBI Taxonomy" id="10116"/>
    <lineage>
        <taxon>Eukaryota</taxon>
        <taxon>Metazoa</taxon>
        <taxon>Chordata</taxon>
        <taxon>Craniata</taxon>
        <taxon>Vertebrata</taxon>
        <taxon>Euteleostomi</taxon>
        <taxon>Mammalia</taxon>
        <taxon>Eutheria</taxon>
        <taxon>Euarchontoglires</taxon>
        <taxon>Glires</taxon>
        <taxon>Rodentia</taxon>
        <taxon>Myomorpha</taxon>
        <taxon>Muroidea</taxon>
        <taxon>Muridae</taxon>
        <taxon>Murinae</taxon>
        <taxon>Rattus</taxon>
    </lineage>
</organism>
<accession>P63086</accession>
<accession>P27703</accession>